<protein>
    <recommendedName>
        <fullName evidence="1">Large ribosomal subunit protein uL10</fullName>
    </recommendedName>
    <alternativeName>
        <fullName evidence="2">50S ribosomal protein L10</fullName>
    </alternativeName>
</protein>
<name>RL10_BORRA</name>
<gene>
    <name evidence="1" type="primary">rplJ</name>
    <name type="ordered locus">BRE_389</name>
</gene>
<feature type="chain" id="PRO_1000120925" description="Large ribosomal subunit protein uL10">
    <location>
        <begin position="1"/>
        <end position="162"/>
    </location>
</feature>
<organism>
    <name type="scientific">Borrelia recurrentis (strain A1)</name>
    <dbReference type="NCBI Taxonomy" id="412418"/>
    <lineage>
        <taxon>Bacteria</taxon>
        <taxon>Pseudomonadati</taxon>
        <taxon>Spirochaetota</taxon>
        <taxon>Spirochaetia</taxon>
        <taxon>Spirochaetales</taxon>
        <taxon>Borreliaceae</taxon>
        <taxon>Borrelia</taxon>
    </lineage>
</organism>
<evidence type="ECO:0000255" key="1">
    <source>
        <dbReference type="HAMAP-Rule" id="MF_00362"/>
    </source>
</evidence>
<evidence type="ECO:0000305" key="2"/>
<sequence length="162" mass="18263">MDKKINPKKVEMFNSLKEFLDGKDNIFFLDYRGLTVAELTKLRSRVEDEKGALKVVKNNIMKRVLKDKDIEGLDSYLLGPTAVVTAFDEANVIAKIFYEFVKTTTLKVKGGFVLGEVYDESKLSAYSKLPTKIESISLFMSVLKAPMSKLVRTLKALSDIKV</sequence>
<proteinExistence type="inferred from homology"/>
<comment type="function">
    <text evidence="1">Forms part of the ribosomal stalk, playing a central role in the interaction of the ribosome with GTP-bound translation factors.</text>
</comment>
<comment type="subunit">
    <text evidence="1">Part of the ribosomal stalk of the 50S ribosomal subunit. The N-terminus interacts with L11 and the large rRNA to form the base of the stalk. The C-terminus forms an elongated spine to which L12 dimers bind in a sequential fashion forming a multimeric L10(L12)X complex.</text>
</comment>
<comment type="similarity">
    <text evidence="1">Belongs to the universal ribosomal protein uL10 family.</text>
</comment>
<keyword id="KW-0687">Ribonucleoprotein</keyword>
<keyword id="KW-0689">Ribosomal protein</keyword>
<keyword id="KW-0694">RNA-binding</keyword>
<keyword id="KW-0699">rRNA-binding</keyword>
<reference key="1">
    <citation type="journal article" date="2008" name="PLoS Genet.">
        <title>The genome of Borrelia recurrentis, the agent of deadly louse-borne relapsing fever, is a degraded subset of tick-borne Borrelia duttonii.</title>
        <authorList>
            <person name="Lescot M."/>
            <person name="Audic S."/>
            <person name="Robert C."/>
            <person name="Nguyen T.T."/>
            <person name="Blanc G."/>
            <person name="Cutler S.J."/>
            <person name="Wincker P."/>
            <person name="Couloux A."/>
            <person name="Claverie J.-M."/>
            <person name="Raoult D."/>
            <person name="Drancourt M."/>
        </authorList>
    </citation>
    <scope>NUCLEOTIDE SEQUENCE [LARGE SCALE GENOMIC DNA]</scope>
    <source>
        <strain>A1</strain>
    </source>
</reference>
<dbReference type="EMBL" id="CP000993">
    <property type="protein sequence ID" value="ACH94633.1"/>
    <property type="molecule type" value="Genomic_DNA"/>
</dbReference>
<dbReference type="RefSeq" id="WP_012538868.1">
    <property type="nucleotide sequence ID" value="NZ_CP169983.1"/>
</dbReference>
<dbReference type="SMR" id="B5RRJ9"/>
<dbReference type="KEGG" id="bre:BRE_389"/>
<dbReference type="HOGENOM" id="CLU_092227_1_2_12"/>
<dbReference type="Proteomes" id="UP000000612">
    <property type="component" value="Chromosome"/>
</dbReference>
<dbReference type="GO" id="GO:0015934">
    <property type="term" value="C:large ribosomal subunit"/>
    <property type="evidence" value="ECO:0007669"/>
    <property type="project" value="InterPro"/>
</dbReference>
<dbReference type="GO" id="GO:0070180">
    <property type="term" value="F:large ribosomal subunit rRNA binding"/>
    <property type="evidence" value="ECO:0007669"/>
    <property type="project" value="UniProtKB-UniRule"/>
</dbReference>
<dbReference type="GO" id="GO:0003735">
    <property type="term" value="F:structural constituent of ribosome"/>
    <property type="evidence" value="ECO:0007669"/>
    <property type="project" value="InterPro"/>
</dbReference>
<dbReference type="GO" id="GO:0006412">
    <property type="term" value="P:translation"/>
    <property type="evidence" value="ECO:0007669"/>
    <property type="project" value="UniProtKB-UniRule"/>
</dbReference>
<dbReference type="CDD" id="cd05797">
    <property type="entry name" value="Ribosomal_L10"/>
    <property type="match status" value="1"/>
</dbReference>
<dbReference type="Gene3D" id="3.30.70.1730">
    <property type="match status" value="1"/>
</dbReference>
<dbReference type="Gene3D" id="6.10.250.2350">
    <property type="match status" value="1"/>
</dbReference>
<dbReference type="HAMAP" id="MF_00362">
    <property type="entry name" value="Ribosomal_uL10"/>
    <property type="match status" value="1"/>
</dbReference>
<dbReference type="InterPro" id="IPR001790">
    <property type="entry name" value="Ribosomal_uL10"/>
</dbReference>
<dbReference type="InterPro" id="IPR043141">
    <property type="entry name" value="Ribosomal_uL10-like_sf"/>
</dbReference>
<dbReference type="InterPro" id="IPR022973">
    <property type="entry name" value="Ribosomal_uL10_bac"/>
</dbReference>
<dbReference type="InterPro" id="IPR047865">
    <property type="entry name" value="Ribosomal_uL10_bac_type"/>
</dbReference>
<dbReference type="InterPro" id="IPR002363">
    <property type="entry name" value="Ribosomal_uL10_CS_bac"/>
</dbReference>
<dbReference type="NCBIfam" id="NF000955">
    <property type="entry name" value="PRK00099.1-1"/>
    <property type="match status" value="1"/>
</dbReference>
<dbReference type="PANTHER" id="PTHR11560">
    <property type="entry name" value="39S RIBOSOMAL PROTEIN L10, MITOCHONDRIAL"/>
    <property type="match status" value="1"/>
</dbReference>
<dbReference type="Pfam" id="PF00466">
    <property type="entry name" value="Ribosomal_L10"/>
    <property type="match status" value="1"/>
</dbReference>
<dbReference type="SUPFAM" id="SSF160369">
    <property type="entry name" value="Ribosomal protein L10-like"/>
    <property type="match status" value="1"/>
</dbReference>
<dbReference type="PROSITE" id="PS01109">
    <property type="entry name" value="RIBOSOMAL_L10"/>
    <property type="match status" value="1"/>
</dbReference>
<accession>B5RRJ9</accession>